<sequence length="284" mass="30524">MGNGWHEWPLVIFTVLGQCVVGALIVSGIGWFAAKNDADRQRIVRGMFFLWLLMGVGFIASVMHLGSPLRAFNSLNRIGASGLSNEIAAGSIFFAVGGLWWLVAVIGKMPQALGKLWLLFSMALGVIFVWMMTCVYQIDTVPTWHNGYTTLAFFLTVLLSGPILAAAILRAARVTFNTTPFAIISVLALIACAGVIVLQGLSLASIHSSVQQASALVPDYASLQVWRVVLLCAGLGCWLCPLIRRREPHVAGLILGLILILGGEMIGRVLFYGLHMTVGMAIAG</sequence>
<organism>
    <name type="scientific">Escherichia coli (strain K12)</name>
    <dbReference type="NCBI Taxonomy" id="83333"/>
    <lineage>
        <taxon>Bacteria</taxon>
        <taxon>Pseudomonadati</taxon>
        <taxon>Pseudomonadota</taxon>
        <taxon>Gammaproteobacteria</taxon>
        <taxon>Enterobacterales</taxon>
        <taxon>Enterobacteriaceae</taxon>
        <taxon>Escherichia</taxon>
    </lineage>
</organism>
<feature type="chain" id="PRO_0000168967" description="Anaerobic dimethyl sulfoxide reductase chain YnfH">
    <location>
        <begin position="1"/>
        <end position="284"/>
    </location>
</feature>
<feature type="topological domain" description="Periplasmic" evidence="2">
    <location>
        <begin position="1"/>
        <end position="9"/>
    </location>
</feature>
<feature type="transmembrane region" description="Helical" evidence="2">
    <location>
        <begin position="10"/>
        <end position="30"/>
    </location>
</feature>
<feature type="topological domain" description="Cytoplasmic" evidence="2">
    <location>
        <begin position="31"/>
        <end position="45"/>
    </location>
</feature>
<feature type="transmembrane region" description="Helical" evidence="2">
    <location>
        <begin position="46"/>
        <end position="66"/>
    </location>
</feature>
<feature type="topological domain" description="Periplasmic" evidence="2">
    <location>
        <begin position="67"/>
        <end position="86"/>
    </location>
</feature>
<feature type="transmembrane region" description="Helical" evidence="2">
    <location>
        <begin position="87"/>
        <end position="107"/>
    </location>
</feature>
<feature type="topological domain" description="Cytoplasmic" evidence="2">
    <location>
        <begin position="108"/>
        <end position="115"/>
    </location>
</feature>
<feature type="transmembrane region" description="Helical" evidence="2">
    <location>
        <begin position="116"/>
        <end position="136"/>
    </location>
</feature>
<feature type="topological domain" description="Periplasmic" evidence="2">
    <location>
        <begin position="137"/>
        <end position="148"/>
    </location>
</feature>
<feature type="transmembrane region" description="Helical" evidence="2">
    <location>
        <begin position="149"/>
        <end position="169"/>
    </location>
</feature>
<feature type="topological domain" description="Cytoplasmic" evidence="2">
    <location>
        <begin position="170"/>
        <end position="180"/>
    </location>
</feature>
<feature type="transmembrane region" description="Helical" evidence="2">
    <location>
        <begin position="181"/>
        <end position="201"/>
    </location>
</feature>
<feature type="topological domain" description="Periplasmic" evidence="2">
    <location>
        <begin position="202"/>
        <end position="222"/>
    </location>
</feature>
<feature type="transmembrane region" description="Helical" evidence="2">
    <location>
        <begin position="223"/>
        <end position="243"/>
    </location>
</feature>
<feature type="topological domain" description="Cytoplasmic" evidence="2">
    <location>
        <begin position="244"/>
        <end position="250"/>
    </location>
</feature>
<feature type="transmembrane region" description="Helical" evidence="2">
    <location>
        <begin position="251"/>
        <end position="271"/>
    </location>
</feature>
<feature type="topological domain" description="Periplasmic" evidence="2">
    <location>
        <begin position="272"/>
        <end position="284"/>
    </location>
</feature>
<name>YNFH_ECOLI</name>
<reference key="1">
    <citation type="journal article" date="1996" name="DNA Res.">
        <title>A 570-kb DNA sequence of the Escherichia coli K-12 genome corresponding to the 28.0-40.1 min region on the linkage map.</title>
        <authorList>
            <person name="Aiba H."/>
            <person name="Baba T."/>
            <person name="Fujita K."/>
            <person name="Hayashi K."/>
            <person name="Inada T."/>
            <person name="Isono K."/>
            <person name="Itoh T."/>
            <person name="Kasai H."/>
            <person name="Kashimoto K."/>
            <person name="Kimura S."/>
            <person name="Kitakawa M."/>
            <person name="Kitagawa M."/>
            <person name="Makino K."/>
            <person name="Miki T."/>
            <person name="Mizobuchi K."/>
            <person name="Mori H."/>
            <person name="Mori T."/>
            <person name="Motomura K."/>
            <person name="Nakade S."/>
            <person name="Nakamura Y."/>
            <person name="Nashimoto H."/>
            <person name="Nishio Y."/>
            <person name="Oshima T."/>
            <person name="Saito N."/>
            <person name="Sampei G."/>
            <person name="Seki Y."/>
            <person name="Sivasundaram S."/>
            <person name="Tagami H."/>
            <person name="Takeda J."/>
            <person name="Takemoto K."/>
            <person name="Takeuchi Y."/>
            <person name="Wada C."/>
            <person name="Yamamoto Y."/>
            <person name="Horiuchi T."/>
        </authorList>
    </citation>
    <scope>NUCLEOTIDE SEQUENCE [LARGE SCALE GENOMIC DNA]</scope>
    <source>
        <strain>K12 / W3110 / ATCC 27325 / DSM 5911</strain>
    </source>
</reference>
<reference key="2">
    <citation type="journal article" date="1997" name="Science">
        <title>The complete genome sequence of Escherichia coli K-12.</title>
        <authorList>
            <person name="Blattner F.R."/>
            <person name="Plunkett G. III"/>
            <person name="Bloch C.A."/>
            <person name="Perna N.T."/>
            <person name="Burland V."/>
            <person name="Riley M."/>
            <person name="Collado-Vides J."/>
            <person name="Glasner J.D."/>
            <person name="Rode C.K."/>
            <person name="Mayhew G.F."/>
            <person name="Gregor J."/>
            <person name="Davis N.W."/>
            <person name="Kirkpatrick H.A."/>
            <person name="Goeden M.A."/>
            <person name="Rose D.J."/>
            <person name="Mau B."/>
            <person name="Shao Y."/>
        </authorList>
    </citation>
    <scope>NUCLEOTIDE SEQUENCE [LARGE SCALE GENOMIC DNA]</scope>
    <source>
        <strain>K12 / MG1655 / ATCC 47076</strain>
    </source>
</reference>
<reference key="3">
    <citation type="journal article" date="2006" name="Mol. Syst. Biol.">
        <title>Highly accurate genome sequences of Escherichia coli K-12 strains MG1655 and W3110.</title>
        <authorList>
            <person name="Hayashi K."/>
            <person name="Morooka N."/>
            <person name="Yamamoto Y."/>
            <person name="Fujita K."/>
            <person name="Isono K."/>
            <person name="Choi S."/>
            <person name="Ohtsubo E."/>
            <person name="Baba T."/>
            <person name="Wanner B.L."/>
            <person name="Mori H."/>
            <person name="Horiuchi T."/>
        </authorList>
    </citation>
    <scope>NUCLEOTIDE SEQUENCE [LARGE SCALE GENOMIC DNA]</scope>
    <source>
        <strain>K12 / W3110 / ATCC 27325 / DSM 5911</strain>
    </source>
</reference>
<reference key="4">
    <citation type="journal article" date="2015" name="Bioinformatics">
        <title>Novel function discovery with GeneMANIA: a new integrated resource for gene function prediction in Escherichia coli.</title>
        <authorList>
            <person name="Vlasblom J."/>
            <person name="Zuberi K."/>
            <person name="Rodriguez H."/>
            <person name="Arnold R."/>
            <person name="Gagarinova A."/>
            <person name="Deineko V."/>
            <person name="Kumar A."/>
            <person name="Leung E."/>
            <person name="Rizzolo K."/>
            <person name="Samanfar B."/>
            <person name="Chang L."/>
            <person name="Phanse S."/>
            <person name="Golshani A."/>
            <person name="Greenblatt J.F."/>
            <person name="Houry W.A."/>
            <person name="Emili A."/>
            <person name="Morris Q."/>
            <person name="Bader G."/>
            <person name="Babu M."/>
        </authorList>
    </citation>
    <scope>DISRUPTION PHENOTYPE</scope>
    <source>
        <strain>K12 / BW25113</strain>
    </source>
</reference>
<keyword id="KW-0997">Cell inner membrane</keyword>
<keyword id="KW-1003">Cell membrane</keyword>
<keyword id="KW-0472">Membrane</keyword>
<keyword id="KW-0560">Oxidoreductase</keyword>
<keyword id="KW-1185">Reference proteome</keyword>
<keyword id="KW-0812">Transmembrane</keyword>
<keyword id="KW-1133">Transmembrane helix</keyword>
<evidence type="ECO:0000250" key="1"/>
<evidence type="ECO:0000255" key="2"/>
<evidence type="ECO:0000269" key="3">
    <source>
    </source>
</evidence>
<evidence type="ECO:0000305" key="4"/>
<proteinExistence type="inferred from homology"/>
<accession>P76173</accession>
<accession>P77142</accession>
<gene>
    <name type="primary">ynfH</name>
    <name type="ordered locus">b1590</name>
    <name type="ordered locus">JW5261</name>
</gene>
<protein>
    <recommendedName>
        <fullName>Anaerobic dimethyl sulfoxide reductase chain YnfH</fullName>
    </recommendedName>
    <alternativeName>
        <fullName>DMSO reductase anchor subunit YnfH</fullName>
    </alternativeName>
</protein>
<comment type="function">
    <text evidence="1">Terminal reductase during anaerobic growth on various sulfoxide and N-oxide compounds. The C subunit anchors the other two subunits to the membrane and stabilize the catalytic subunits (By similarity).</text>
</comment>
<comment type="subunit">
    <text evidence="4">The complex consists of three subunits: YnfF, the reductase; YnfG, an electron transfer protein, and YnfH, a membrane anchor protein.</text>
</comment>
<comment type="subcellular location">
    <subcellularLocation>
        <location evidence="1">Cell inner membrane</location>
        <topology evidence="1">Multi-pass membrane protein</topology>
    </subcellularLocation>
</comment>
<comment type="disruption phenotype">
    <text evidence="3">Cells grow to slightly higher density than wild-type in sublethal levels of streptomycin (PubMed:25316676).</text>
</comment>
<comment type="similarity">
    <text evidence="4">Belongs to the DmsC family.</text>
</comment>
<dbReference type="EMBL" id="U00096">
    <property type="protein sequence ID" value="AAC74662.1"/>
    <property type="molecule type" value="Genomic_DNA"/>
</dbReference>
<dbReference type="EMBL" id="AP009048">
    <property type="protein sequence ID" value="BAA15314.2"/>
    <property type="molecule type" value="Genomic_DNA"/>
</dbReference>
<dbReference type="PIR" id="H64914">
    <property type="entry name" value="H64914"/>
</dbReference>
<dbReference type="RefSeq" id="NP_416107.1">
    <property type="nucleotide sequence ID" value="NC_000913.3"/>
</dbReference>
<dbReference type="RefSeq" id="WP_000526503.1">
    <property type="nucleotide sequence ID" value="NZ_SSZK01000001.1"/>
</dbReference>
<dbReference type="SMR" id="P76173"/>
<dbReference type="BioGRID" id="4263479">
    <property type="interactions" value="7"/>
</dbReference>
<dbReference type="ComplexPortal" id="CPX-6019">
    <property type="entry name" value="Putative dimethyl sulfoxide reductase"/>
</dbReference>
<dbReference type="FunCoup" id="P76173">
    <property type="interactions" value="13"/>
</dbReference>
<dbReference type="STRING" id="511145.b1590"/>
<dbReference type="TCDB" id="5.A.3.3.1">
    <property type="family name" value="the prokaryotic molybdopterin-containing oxidoreductase (pmo) family"/>
</dbReference>
<dbReference type="jPOST" id="P76173"/>
<dbReference type="PaxDb" id="511145-b1590"/>
<dbReference type="EnsemblBacteria" id="AAC74662">
    <property type="protein sequence ID" value="AAC74662"/>
    <property type="gene ID" value="b1590"/>
</dbReference>
<dbReference type="GeneID" id="945822"/>
<dbReference type="KEGG" id="ecj:JW5261"/>
<dbReference type="KEGG" id="eco:b1590"/>
<dbReference type="KEGG" id="ecoc:C3026_09160"/>
<dbReference type="PATRIC" id="fig|1411691.4.peg.672"/>
<dbReference type="EchoBASE" id="EB3607"/>
<dbReference type="eggNOG" id="COG3302">
    <property type="taxonomic scope" value="Bacteria"/>
</dbReference>
<dbReference type="HOGENOM" id="CLU_064909_2_0_6"/>
<dbReference type="InParanoid" id="P76173"/>
<dbReference type="OMA" id="RVGSSMM"/>
<dbReference type="OrthoDB" id="4394845at2"/>
<dbReference type="PhylomeDB" id="P76173"/>
<dbReference type="BioCyc" id="EcoCyc:G6848-MONOMER"/>
<dbReference type="BioCyc" id="MetaCyc:G6848-MONOMER"/>
<dbReference type="PRO" id="PR:P76173"/>
<dbReference type="Proteomes" id="UP000000625">
    <property type="component" value="Chromosome"/>
</dbReference>
<dbReference type="GO" id="GO:0009390">
    <property type="term" value="C:dimethyl sulfoxide reductase complex"/>
    <property type="evidence" value="ECO:0000318"/>
    <property type="project" value="GO_Central"/>
</dbReference>
<dbReference type="GO" id="GO:1990204">
    <property type="term" value="C:oxidoreductase complex"/>
    <property type="evidence" value="ECO:0000303"/>
    <property type="project" value="ComplexPortal"/>
</dbReference>
<dbReference type="GO" id="GO:0005886">
    <property type="term" value="C:plasma membrane"/>
    <property type="evidence" value="ECO:0000314"/>
    <property type="project" value="EcoCyc"/>
</dbReference>
<dbReference type="GO" id="GO:0009389">
    <property type="term" value="F:dimethyl sulfoxide reductase activity"/>
    <property type="evidence" value="ECO:0000318"/>
    <property type="project" value="GO_Central"/>
</dbReference>
<dbReference type="GO" id="GO:0019645">
    <property type="term" value="P:anaerobic electron transport chain"/>
    <property type="evidence" value="ECO:0007669"/>
    <property type="project" value="InterPro"/>
</dbReference>
<dbReference type="GO" id="GO:0009061">
    <property type="term" value="P:anaerobic respiration"/>
    <property type="evidence" value="ECO:0000318"/>
    <property type="project" value="GO_Central"/>
</dbReference>
<dbReference type="InterPro" id="IPR007059">
    <property type="entry name" value="DmsC"/>
</dbReference>
<dbReference type="PANTHER" id="PTHR38095">
    <property type="entry name" value="ANAEROBIC DIMETHYL SULFOXIDE REDUCTASE CHAIN YNFH"/>
    <property type="match status" value="1"/>
</dbReference>
<dbReference type="PANTHER" id="PTHR38095:SF1">
    <property type="entry name" value="ANAEROBIC DIMETHYL SULFOXIDE REDUCTASE CHAIN YNFH"/>
    <property type="match status" value="1"/>
</dbReference>
<dbReference type="Pfam" id="PF04976">
    <property type="entry name" value="DmsC"/>
    <property type="match status" value="1"/>
</dbReference>